<feature type="chain" id="PRO_0000400215" description="1D-myo-inositol 2-acetamido-2-deoxy-alpha-D-glucopyranoside deacetylase">
    <location>
        <begin position="1"/>
        <end position="292"/>
    </location>
</feature>
<feature type="binding site" evidence="1">
    <location>
        <position position="12"/>
    </location>
    <ligand>
        <name>Zn(2+)</name>
        <dbReference type="ChEBI" id="CHEBI:29105"/>
    </ligand>
</feature>
<feature type="binding site" evidence="1">
    <location>
        <position position="15"/>
    </location>
    <ligand>
        <name>Zn(2+)</name>
        <dbReference type="ChEBI" id="CHEBI:29105"/>
    </ligand>
</feature>
<feature type="binding site" evidence="1">
    <location>
        <position position="147"/>
    </location>
    <ligand>
        <name>Zn(2+)</name>
        <dbReference type="ChEBI" id="CHEBI:29105"/>
    </ligand>
</feature>
<dbReference type="EC" id="3.5.1.103" evidence="1"/>
<dbReference type="EMBL" id="AP011115">
    <property type="protein sequence ID" value="BAH54243.1"/>
    <property type="molecule type" value="Genomic_DNA"/>
</dbReference>
<dbReference type="RefSeq" id="WP_015889732.1">
    <property type="nucleotide sequence ID" value="NC_012522.1"/>
</dbReference>
<dbReference type="SMR" id="C1AZH2"/>
<dbReference type="STRING" id="632772.ROP_59960"/>
<dbReference type="KEGG" id="rop:ROP_59960"/>
<dbReference type="PATRIC" id="fig|632772.20.peg.6263"/>
<dbReference type="HOGENOM" id="CLU_049311_2_1_11"/>
<dbReference type="OrthoDB" id="158614at2"/>
<dbReference type="Proteomes" id="UP000002212">
    <property type="component" value="Chromosome"/>
</dbReference>
<dbReference type="GO" id="GO:0035595">
    <property type="term" value="F:N-acetylglucosaminylinositol deacetylase activity"/>
    <property type="evidence" value="ECO:0007669"/>
    <property type="project" value="UniProtKB-EC"/>
</dbReference>
<dbReference type="GO" id="GO:0008270">
    <property type="term" value="F:zinc ion binding"/>
    <property type="evidence" value="ECO:0007669"/>
    <property type="project" value="UniProtKB-UniRule"/>
</dbReference>
<dbReference type="GO" id="GO:0010125">
    <property type="term" value="P:mycothiol biosynthetic process"/>
    <property type="evidence" value="ECO:0007669"/>
    <property type="project" value="UniProtKB-UniRule"/>
</dbReference>
<dbReference type="Gene3D" id="3.40.50.10320">
    <property type="entry name" value="LmbE-like"/>
    <property type="match status" value="1"/>
</dbReference>
<dbReference type="HAMAP" id="MF_01696">
    <property type="entry name" value="MshB"/>
    <property type="match status" value="1"/>
</dbReference>
<dbReference type="InterPro" id="IPR003737">
    <property type="entry name" value="GlcNAc_PI_deacetylase-related"/>
</dbReference>
<dbReference type="InterPro" id="IPR024078">
    <property type="entry name" value="LmbE-like_dom_sf"/>
</dbReference>
<dbReference type="InterPro" id="IPR017810">
    <property type="entry name" value="Mycothiol_biosynthesis_MshB"/>
</dbReference>
<dbReference type="NCBIfam" id="TIGR03445">
    <property type="entry name" value="mycothiol_MshB"/>
    <property type="match status" value="1"/>
</dbReference>
<dbReference type="PANTHER" id="PTHR12993:SF26">
    <property type="entry name" value="1D-MYO-INOSITOL 2-ACETAMIDO-2-DEOXY-ALPHA-D-GLUCOPYRANOSIDE DEACETYLASE"/>
    <property type="match status" value="1"/>
</dbReference>
<dbReference type="PANTHER" id="PTHR12993">
    <property type="entry name" value="N-ACETYLGLUCOSAMINYL-PHOSPHATIDYLINOSITOL DE-N-ACETYLASE-RELATED"/>
    <property type="match status" value="1"/>
</dbReference>
<dbReference type="Pfam" id="PF02585">
    <property type="entry name" value="PIG-L"/>
    <property type="match status" value="1"/>
</dbReference>
<dbReference type="SUPFAM" id="SSF102588">
    <property type="entry name" value="LmbE-like"/>
    <property type="match status" value="1"/>
</dbReference>
<gene>
    <name evidence="1" type="primary">mshB</name>
    <name type="ordered locus">ROP_59960</name>
</gene>
<reference key="1">
    <citation type="submission" date="2009-03" db="EMBL/GenBank/DDBJ databases">
        <title>Comparison of the complete genome sequences of Rhodococcus erythropolis PR4 and Rhodococcus opacus B4.</title>
        <authorList>
            <person name="Takarada H."/>
            <person name="Sekine M."/>
            <person name="Hosoyama A."/>
            <person name="Yamada R."/>
            <person name="Fujisawa T."/>
            <person name="Omata S."/>
            <person name="Shimizu A."/>
            <person name="Tsukatani N."/>
            <person name="Tanikawa S."/>
            <person name="Fujita N."/>
            <person name="Harayama S."/>
        </authorList>
    </citation>
    <scope>NUCLEOTIDE SEQUENCE [LARGE SCALE GENOMIC DNA]</scope>
    <source>
        <strain>B4</strain>
    </source>
</reference>
<protein>
    <recommendedName>
        <fullName evidence="1">1D-myo-inositol 2-acetamido-2-deoxy-alpha-D-glucopyranoside deacetylase</fullName>
        <shortName evidence="1">GlcNAc-Ins deacetylase</shortName>
        <ecNumber evidence="1">3.5.1.103</ecNumber>
    </recommendedName>
    <alternativeName>
        <fullName>N-acetyl-1-D-myo-inositol 2-amino-2-deoxy-alpha-D-glucopyranoside deacetylase</fullName>
    </alternativeName>
</protein>
<name>MSHB_RHOOB</name>
<organism>
    <name type="scientific">Rhodococcus opacus (strain B4)</name>
    <dbReference type="NCBI Taxonomy" id="632772"/>
    <lineage>
        <taxon>Bacteria</taxon>
        <taxon>Bacillati</taxon>
        <taxon>Actinomycetota</taxon>
        <taxon>Actinomycetes</taxon>
        <taxon>Mycobacteriales</taxon>
        <taxon>Nocardiaceae</taxon>
        <taxon>Rhodococcus</taxon>
    </lineage>
</organism>
<accession>C1AZH2</accession>
<proteinExistence type="inferred from homology"/>
<sequence>MSERRLLLVHAHPDDETLTTGGTIARYAADGADVHVLTCTLGEEGEVIGDEWAHLVAGAADQLGGFRIGELTSALSSLGAGRPRFLLGAGRFRDSGMAGTASAANPRAFVNADPDAVTAAIVAVIRDVRPHVVVTYDPDGGYGHPDHIQAHRIVTAAVEAAGTERFPDAGVPWDVAKLYWTVTEASALEAGLCRIGDLPDGWRLPEPGELPSVPDGDVTTVIDVRGVLDAKRNALSAHATQVTVAPSGTEYALSNDIAQPILVEEHFVLVRGALGDRDADGREWDLFAGVGH</sequence>
<keyword id="KW-0378">Hydrolase</keyword>
<keyword id="KW-0479">Metal-binding</keyword>
<keyword id="KW-0862">Zinc</keyword>
<evidence type="ECO:0000255" key="1">
    <source>
        <dbReference type="HAMAP-Rule" id="MF_01696"/>
    </source>
</evidence>
<comment type="function">
    <text evidence="1">Catalyzes the deacetylation of 1D-myo-inositol 2-acetamido-2-deoxy-alpha-D-glucopyranoside (GlcNAc-Ins) in the mycothiol biosynthesis pathway.</text>
</comment>
<comment type="catalytic activity">
    <reaction evidence="1">
        <text>1D-myo-inositol 2-acetamido-2-deoxy-alpha-D-glucopyranoside + H2O = 1D-myo-inositol 2-amino-2-deoxy-alpha-D-glucopyranoside + acetate</text>
        <dbReference type="Rhea" id="RHEA:26180"/>
        <dbReference type="ChEBI" id="CHEBI:15377"/>
        <dbReference type="ChEBI" id="CHEBI:30089"/>
        <dbReference type="ChEBI" id="CHEBI:52442"/>
        <dbReference type="ChEBI" id="CHEBI:58886"/>
        <dbReference type="EC" id="3.5.1.103"/>
    </reaction>
</comment>
<comment type="cofactor">
    <cofactor evidence="1">
        <name>Zn(2+)</name>
        <dbReference type="ChEBI" id="CHEBI:29105"/>
    </cofactor>
    <text evidence="1">Binds 1 zinc ion per subunit.</text>
</comment>
<comment type="similarity">
    <text evidence="1">Belongs to the MshB deacetylase family.</text>
</comment>